<accession>B4TK32</accession>
<sequence>MSDDVALPLQFTDAAANKVKSLIADEDNPNLKLRVYITGGGCSGFQYGFTFDDQVNEGDMTIEKQGVGLVVDPMSLQYLVGGSVDYTEGLEGSRFIVTNPNAKSTCGCGSSFSI</sequence>
<gene>
    <name evidence="1" type="primary">erpA</name>
    <name type="ordered locus">SeHA_C0241</name>
</gene>
<dbReference type="EMBL" id="CP001120">
    <property type="protein sequence ID" value="ACF66298.1"/>
    <property type="molecule type" value="Genomic_DNA"/>
</dbReference>
<dbReference type="RefSeq" id="WP_001278668.1">
    <property type="nucleotide sequence ID" value="NC_011083.1"/>
</dbReference>
<dbReference type="SMR" id="B4TK32"/>
<dbReference type="GeneID" id="66754727"/>
<dbReference type="KEGG" id="seh:SeHA_C0241"/>
<dbReference type="HOGENOM" id="CLU_069054_5_3_6"/>
<dbReference type="Proteomes" id="UP000001866">
    <property type="component" value="Chromosome"/>
</dbReference>
<dbReference type="GO" id="GO:0005829">
    <property type="term" value="C:cytosol"/>
    <property type="evidence" value="ECO:0007669"/>
    <property type="project" value="TreeGrafter"/>
</dbReference>
<dbReference type="GO" id="GO:0051537">
    <property type="term" value="F:2 iron, 2 sulfur cluster binding"/>
    <property type="evidence" value="ECO:0007669"/>
    <property type="project" value="UniProtKB-ARBA"/>
</dbReference>
<dbReference type="GO" id="GO:0051539">
    <property type="term" value="F:4 iron, 4 sulfur cluster binding"/>
    <property type="evidence" value="ECO:0007669"/>
    <property type="project" value="TreeGrafter"/>
</dbReference>
<dbReference type="GO" id="GO:0005506">
    <property type="term" value="F:iron ion binding"/>
    <property type="evidence" value="ECO:0007669"/>
    <property type="project" value="UniProtKB-UniRule"/>
</dbReference>
<dbReference type="GO" id="GO:0016226">
    <property type="term" value="P:iron-sulfur cluster assembly"/>
    <property type="evidence" value="ECO:0007669"/>
    <property type="project" value="UniProtKB-UniRule"/>
</dbReference>
<dbReference type="FunFam" id="2.60.300.12:FF:000002">
    <property type="entry name" value="Iron-sulfur cluster insertion protein ErpA"/>
    <property type="match status" value="1"/>
</dbReference>
<dbReference type="Gene3D" id="2.60.300.12">
    <property type="entry name" value="HesB-like domain"/>
    <property type="match status" value="1"/>
</dbReference>
<dbReference type="HAMAP" id="MF_01380">
    <property type="entry name" value="Fe_S_insert_ErpA"/>
    <property type="match status" value="1"/>
</dbReference>
<dbReference type="InterPro" id="IPR000361">
    <property type="entry name" value="FeS_biogenesis"/>
</dbReference>
<dbReference type="InterPro" id="IPR016092">
    <property type="entry name" value="FeS_cluster_insertion"/>
</dbReference>
<dbReference type="InterPro" id="IPR017870">
    <property type="entry name" value="FeS_cluster_insertion_CS"/>
</dbReference>
<dbReference type="InterPro" id="IPR023063">
    <property type="entry name" value="FeS_cluster_insertion_RrpA"/>
</dbReference>
<dbReference type="InterPro" id="IPR035903">
    <property type="entry name" value="HesB-like_dom_sf"/>
</dbReference>
<dbReference type="NCBIfam" id="TIGR00049">
    <property type="entry name" value="iron-sulfur cluster assembly accessory protein"/>
    <property type="match status" value="1"/>
</dbReference>
<dbReference type="NCBIfam" id="NF010147">
    <property type="entry name" value="PRK13623.1"/>
    <property type="match status" value="1"/>
</dbReference>
<dbReference type="PANTHER" id="PTHR43011">
    <property type="entry name" value="IRON-SULFUR CLUSTER ASSEMBLY 2 HOMOLOG, MITOCHONDRIAL"/>
    <property type="match status" value="1"/>
</dbReference>
<dbReference type="PANTHER" id="PTHR43011:SF1">
    <property type="entry name" value="IRON-SULFUR CLUSTER ASSEMBLY 2 HOMOLOG, MITOCHONDRIAL"/>
    <property type="match status" value="1"/>
</dbReference>
<dbReference type="Pfam" id="PF01521">
    <property type="entry name" value="Fe-S_biosyn"/>
    <property type="match status" value="1"/>
</dbReference>
<dbReference type="SUPFAM" id="SSF89360">
    <property type="entry name" value="HesB-like domain"/>
    <property type="match status" value="1"/>
</dbReference>
<dbReference type="PROSITE" id="PS01152">
    <property type="entry name" value="HESB"/>
    <property type="match status" value="1"/>
</dbReference>
<protein>
    <recommendedName>
        <fullName evidence="1">Iron-sulfur cluster insertion protein ErpA</fullName>
    </recommendedName>
</protein>
<proteinExistence type="inferred from homology"/>
<evidence type="ECO:0000255" key="1">
    <source>
        <dbReference type="HAMAP-Rule" id="MF_01380"/>
    </source>
</evidence>
<comment type="function">
    <text evidence="1">Required for insertion of 4Fe-4S clusters for at least IspG.</text>
</comment>
<comment type="cofactor">
    <cofactor evidence="1">
        <name>iron-sulfur cluster</name>
        <dbReference type="ChEBI" id="CHEBI:30408"/>
    </cofactor>
    <text evidence="1">Binds 1 iron-sulfur cluster per subunit.</text>
</comment>
<comment type="subunit">
    <text evidence="1">Homodimer.</text>
</comment>
<comment type="similarity">
    <text evidence="1">Belongs to the HesB/IscA family.</text>
</comment>
<feature type="chain" id="PRO_1000144932" description="Iron-sulfur cluster insertion protein ErpA">
    <location>
        <begin position="1"/>
        <end position="114"/>
    </location>
</feature>
<feature type="binding site" evidence="1">
    <location>
        <position position="42"/>
    </location>
    <ligand>
        <name>iron-sulfur cluster</name>
        <dbReference type="ChEBI" id="CHEBI:30408"/>
    </ligand>
</feature>
<feature type="binding site" evidence="1">
    <location>
        <position position="106"/>
    </location>
    <ligand>
        <name>iron-sulfur cluster</name>
        <dbReference type="ChEBI" id="CHEBI:30408"/>
    </ligand>
</feature>
<feature type="binding site" evidence="1">
    <location>
        <position position="108"/>
    </location>
    <ligand>
        <name>iron-sulfur cluster</name>
        <dbReference type="ChEBI" id="CHEBI:30408"/>
    </ligand>
</feature>
<reference key="1">
    <citation type="journal article" date="2011" name="J. Bacteriol.">
        <title>Comparative genomics of 28 Salmonella enterica isolates: evidence for CRISPR-mediated adaptive sublineage evolution.</title>
        <authorList>
            <person name="Fricke W.F."/>
            <person name="Mammel M.K."/>
            <person name="McDermott P.F."/>
            <person name="Tartera C."/>
            <person name="White D.G."/>
            <person name="Leclerc J.E."/>
            <person name="Ravel J."/>
            <person name="Cebula T.A."/>
        </authorList>
    </citation>
    <scope>NUCLEOTIDE SEQUENCE [LARGE SCALE GENOMIC DNA]</scope>
    <source>
        <strain>SL476</strain>
    </source>
</reference>
<organism>
    <name type="scientific">Salmonella heidelberg (strain SL476)</name>
    <dbReference type="NCBI Taxonomy" id="454169"/>
    <lineage>
        <taxon>Bacteria</taxon>
        <taxon>Pseudomonadati</taxon>
        <taxon>Pseudomonadota</taxon>
        <taxon>Gammaproteobacteria</taxon>
        <taxon>Enterobacterales</taxon>
        <taxon>Enterobacteriaceae</taxon>
        <taxon>Salmonella</taxon>
    </lineage>
</organism>
<name>ERPA_SALHS</name>
<keyword id="KW-0408">Iron</keyword>
<keyword id="KW-0411">Iron-sulfur</keyword>
<keyword id="KW-0479">Metal-binding</keyword>